<organism>
    <name type="scientific">Bordetella parapertussis (strain 12822 / ATCC BAA-587 / NCTC 13253)</name>
    <dbReference type="NCBI Taxonomy" id="257311"/>
    <lineage>
        <taxon>Bacteria</taxon>
        <taxon>Pseudomonadati</taxon>
        <taxon>Pseudomonadota</taxon>
        <taxon>Betaproteobacteria</taxon>
        <taxon>Burkholderiales</taxon>
        <taxon>Alcaligenaceae</taxon>
        <taxon>Bordetella</taxon>
    </lineage>
</organism>
<protein>
    <recommendedName>
        <fullName evidence="1">Glycine dehydrogenase (decarboxylating)</fullName>
        <ecNumber evidence="1">1.4.4.2</ecNumber>
    </recommendedName>
    <alternativeName>
        <fullName evidence="1">Glycine cleavage system P-protein</fullName>
    </alternativeName>
    <alternativeName>
        <fullName evidence="1">Glycine decarboxylase</fullName>
    </alternativeName>
    <alternativeName>
        <fullName evidence="1">Glycine dehydrogenase (aminomethyl-transferring)</fullName>
    </alternativeName>
</protein>
<name>GCSP_BORPA</name>
<comment type="function">
    <text evidence="1">The glycine cleavage system catalyzes the degradation of glycine. The P protein binds the alpha-amino group of glycine through its pyridoxal phosphate cofactor; CO(2) is released and the remaining methylamine moiety is then transferred to the lipoamide cofactor of the H protein.</text>
</comment>
<comment type="catalytic activity">
    <reaction evidence="1">
        <text>N(6)-[(R)-lipoyl]-L-lysyl-[glycine-cleavage complex H protein] + glycine + H(+) = N(6)-[(R)-S(8)-aminomethyldihydrolipoyl]-L-lysyl-[glycine-cleavage complex H protein] + CO2</text>
        <dbReference type="Rhea" id="RHEA:24304"/>
        <dbReference type="Rhea" id="RHEA-COMP:10494"/>
        <dbReference type="Rhea" id="RHEA-COMP:10495"/>
        <dbReference type="ChEBI" id="CHEBI:15378"/>
        <dbReference type="ChEBI" id="CHEBI:16526"/>
        <dbReference type="ChEBI" id="CHEBI:57305"/>
        <dbReference type="ChEBI" id="CHEBI:83099"/>
        <dbReference type="ChEBI" id="CHEBI:83143"/>
        <dbReference type="EC" id="1.4.4.2"/>
    </reaction>
</comment>
<comment type="cofactor">
    <cofactor evidence="1">
        <name>pyridoxal 5'-phosphate</name>
        <dbReference type="ChEBI" id="CHEBI:597326"/>
    </cofactor>
</comment>
<comment type="subunit">
    <text evidence="1">The glycine cleavage system is composed of four proteins: P, T, L and H.</text>
</comment>
<comment type="similarity">
    <text evidence="1">Belongs to the GcvP family.</text>
</comment>
<reference key="1">
    <citation type="journal article" date="2003" name="Nat. Genet.">
        <title>Comparative analysis of the genome sequences of Bordetella pertussis, Bordetella parapertussis and Bordetella bronchiseptica.</title>
        <authorList>
            <person name="Parkhill J."/>
            <person name="Sebaihia M."/>
            <person name="Preston A."/>
            <person name="Murphy L.D."/>
            <person name="Thomson N.R."/>
            <person name="Harris D.E."/>
            <person name="Holden M.T.G."/>
            <person name="Churcher C.M."/>
            <person name="Bentley S.D."/>
            <person name="Mungall K.L."/>
            <person name="Cerdeno-Tarraga A.-M."/>
            <person name="Temple L."/>
            <person name="James K.D."/>
            <person name="Harris B."/>
            <person name="Quail M.A."/>
            <person name="Achtman M."/>
            <person name="Atkin R."/>
            <person name="Baker S."/>
            <person name="Basham D."/>
            <person name="Bason N."/>
            <person name="Cherevach I."/>
            <person name="Chillingworth T."/>
            <person name="Collins M."/>
            <person name="Cronin A."/>
            <person name="Davis P."/>
            <person name="Doggett J."/>
            <person name="Feltwell T."/>
            <person name="Goble A."/>
            <person name="Hamlin N."/>
            <person name="Hauser H."/>
            <person name="Holroyd S."/>
            <person name="Jagels K."/>
            <person name="Leather S."/>
            <person name="Moule S."/>
            <person name="Norberczak H."/>
            <person name="O'Neil S."/>
            <person name="Ormond D."/>
            <person name="Price C."/>
            <person name="Rabbinowitsch E."/>
            <person name="Rutter S."/>
            <person name="Sanders M."/>
            <person name="Saunders D."/>
            <person name="Seeger K."/>
            <person name="Sharp S."/>
            <person name="Simmonds M."/>
            <person name="Skelton J."/>
            <person name="Squares R."/>
            <person name="Squares S."/>
            <person name="Stevens K."/>
            <person name="Unwin L."/>
            <person name="Whitehead S."/>
            <person name="Barrell B.G."/>
            <person name="Maskell D.J."/>
        </authorList>
    </citation>
    <scope>NUCLEOTIDE SEQUENCE [LARGE SCALE GENOMIC DNA]</scope>
    <source>
        <strain>12822 / ATCC BAA-587 / NCTC 13253</strain>
    </source>
</reference>
<keyword id="KW-0560">Oxidoreductase</keyword>
<keyword id="KW-0663">Pyridoxal phosphate</keyword>
<proteinExistence type="inferred from homology"/>
<accession>Q7W1C4</accession>
<sequence>MSRAPDTHSDFIPRHIGPSDEDQATMLAAIGAASLDALIDEVVPPRIRSRAPLALPAARSETDVLQDLKRMAARNQIYRNYIGQGYYGTHTPNVVLRNVLENPAWYTAYTPYQPEISQGRLEALLNYQTMVADLTGLDISNASLLDEGTAAAEAMTLARRGSRSSSPVFFVSQHCHPQTLEVVRTRAEGLGIELVIGDESRGLPECFGVLLQYPHSLGGVADYRELAQAAHAQGAVVACVTDLLALALIEPPGQWGADIAVGSAQRFGVPFGFGGPHAGFMACRDAYKRNMPGRLVGVSKDAQGNPALRLALQTREQHIRREKATSNICTAQVLLAVMAGLYAVWHGPRGVRRIAERVQSLTGALRAALAGLGVKVANDTWFDTLLLETGVATPAILAAADCARTNLRQVDGARLAVSLDETVTLADLQALVNVFAAGLGKDEVALPAPQASLDGIPAAVRRQGPILSHPVFSSVQSETDMLRYLRKLADKDLALDRTMIPLGSCTMKLNATAEMIPITWPEFALIHPFAPASQTPGYRELIDGLSAQLCEITGYDGISLQPNSGAQGEYAGLLAIRAYHQANGQPQRNVCLIPASAHGTNPASAQLAGMDVVVVASDANGNVDLADLRARIAQVGERLAALMITYPSTHGVFEEAVTEICDAVHEAGGQVYLDGANMNAMVGVAQPGKFGSDVSHLNLHKTFCIPHGGGGPGVGPVAVRAHLAPYLPGVLDAQGRLDPEAKVGPVSAAPYGSAGILPIPYVYIALMGAEGLRRATEVAILNANYIAARLRDHYPVLYAGRNGRVAHECILDVRPLKETSGISAEDIAKRLMDYGFHAPTMSFPVAGTLMVEPTESEGLAELERFIEAMIAIRAEIAQIESGERDRDDNVLRNAPHTAQMLLAEEWHHDYPRQQAAYPVASLRENKYWPPVARVDNAYGDRNLVCACLPVEAYA</sequence>
<feature type="chain" id="PRO_0000166905" description="Glycine dehydrogenase (decarboxylating)">
    <location>
        <begin position="1"/>
        <end position="954"/>
    </location>
</feature>
<feature type="modified residue" description="N6-(pyridoxal phosphate)lysine" evidence="1">
    <location>
        <position position="701"/>
    </location>
</feature>
<gene>
    <name evidence="1" type="primary">gcvP</name>
    <name type="ordered locus">BPP0771</name>
</gene>
<evidence type="ECO:0000255" key="1">
    <source>
        <dbReference type="HAMAP-Rule" id="MF_00711"/>
    </source>
</evidence>
<dbReference type="EC" id="1.4.4.2" evidence="1"/>
<dbReference type="EMBL" id="BX640425">
    <property type="protein sequence ID" value="CAE40180.1"/>
    <property type="molecule type" value="Genomic_DNA"/>
</dbReference>
<dbReference type="RefSeq" id="WP_010927674.1">
    <property type="nucleotide sequence ID" value="NC_002928.3"/>
</dbReference>
<dbReference type="SMR" id="Q7W1C4"/>
<dbReference type="GeneID" id="93202521"/>
<dbReference type="KEGG" id="bpa:BPP0771"/>
<dbReference type="HOGENOM" id="CLU_004620_3_2_4"/>
<dbReference type="Proteomes" id="UP000001421">
    <property type="component" value="Chromosome"/>
</dbReference>
<dbReference type="GO" id="GO:0005829">
    <property type="term" value="C:cytosol"/>
    <property type="evidence" value="ECO:0007669"/>
    <property type="project" value="TreeGrafter"/>
</dbReference>
<dbReference type="GO" id="GO:0005960">
    <property type="term" value="C:glycine cleavage complex"/>
    <property type="evidence" value="ECO:0007669"/>
    <property type="project" value="TreeGrafter"/>
</dbReference>
<dbReference type="GO" id="GO:0016594">
    <property type="term" value="F:glycine binding"/>
    <property type="evidence" value="ECO:0007669"/>
    <property type="project" value="TreeGrafter"/>
</dbReference>
<dbReference type="GO" id="GO:0004375">
    <property type="term" value="F:glycine dehydrogenase (decarboxylating) activity"/>
    <property type="evidence" value="ECO:0007669"/>
    <property type="project" value="UniProtKB-EC"/>
</dbReference>
<dbReference type="GO" id="GO:0030170">
    <property type="term" value="F:pyridoxal phosphate binding"/>
    <property type="evidence" value="ECO:0007669"/>
    <property type="project" value="TreeGrafter"/>
</dbReference>
<dbReference type="GO" id="GO:0019464">
    <property type="term" value="P:glycine decarboxylation via glycine cleavage system"/>
    <property type="evidence" value="ECO:0007669"/>
    <property type="project" value="UniProtKB-UniRule"/>
</dbReference>
<dbReference type="CDD" id="cd00613">
    <property type="entry name" value="GDC-P"/>
    <property type="match status" value="2"/>
</dbReference>
<dbReference type="FunFam" id="3.40.640.10:FF:000005">
    <property type="entry name" value="Glycine dehydrogenase (decarboxylating), mitochondrial"/>
    <property type="match status" value="1"/>
</dbReference>
<dbReference type="FunFam" id="3.90.1150.10:FF:000007">
    <property type="entry name" value="Glycine dehydrogenase (decarboxylating), mitochondrial"/>
    <property type="match status" value="1"/>
</dbReference>
<dbReference type="FunFam" id="3.40.640.10:FF:000007">
    <property type="entry name" value="glycine dehydrogenase (Decarboxylating), mitochondrial"/>
    <property type="match status" value="1"/>
</dbReference>
<dbReference type="Gene3D" id="3.90.1150.10">
    <property type="entry name" value="Aspartate Aminotransferase, domain 1"/>
    <property type="match status" value="2"/>
</dbReference>
<dbReference type="Gene3D" id="3.40.640.10">
    <property type="entry name" value="Type I PLP-dependent aspartate aminotransferase-like (Major domain)"/>
    <property type="match status" value="2"/>
</dbReference>
<dbReference type="HAMAP" id="MF_00711">
    <property type="entry name" value="GcvP"/>
    <property type="match status" value="1"/>
</dbReference>
<dbReference type="InterPro" id="IPR003437">
    <property type="entry name" value="GcvP"/>
</dbReference>
<dbReference type="InterPro" id="IPR049316">
    <property type="entry name" value="GDC-P_C"/>
</dbReference>
<dbReference type="InterPro" id="IPR049315">
    <property type="entry name" value="GDC-P_N"/>
</dbReference>
<dbReference type="InterPro" id="IPR020581">
    <property type="entry name" value="GDC_P"/>
</dbReference>
<dbReference type="InterPro" id="IPR015424">
    <property type="entry name" value="PyrdxlP-dep_Trfase"/>
</dbReference>
<dbReference type="InterPro" id="IPR015421">
    <property type="entry name" value="PyrdxlP-dep_Trfase_major"/>
</dbReference>
<dbReference type="InterPro" id="IPR015422">
    <property type="entry name" value="PyrdxlP-dep_Trfase_small"/>
</dbReference>
<dbReference type="NCBIfam" id="TIGR00461">
    <property type="entry name" value="gcvP"/>
    <property type="match status" value="1"/>
</dbReference>
<dbReference type="NCBIfam" id="NF001696">
    <property type="entry name" value="PRK00451.1"/>
    <property type="match status" value="1"/>
</dbReference>
<dbReference type="NCBIfam" id="NF003346">
    <property type="entry name" value="PRK04366.1"/>
    <property type="match status" value="1"/>
</dbReference>
<dbReference type="PANTHER" id="PTHR11773:SF1">
    <property type="entry name" value="GLYCINE DEHYDROGENASE (DECARBOXYLATING), MITOCHONDRIAL"/>
    <property type="match status" value="1"/>
</dbReference>
<dbReference type="PANTHER" id="PTHR11773">
    <property type="entry name" value="GLYCINE DEHYDROGENASE, DECARBOXYLATING"/>
    <property type="match status" value="1"/>
</dbReference>
<dbReference type="Pfam" id="PF21478">
    <property type="entry name" value="GcvP2_C"/>
    <property type="match status" value="1"/>
</dbReference>
<dbReference type="Pfam" id="PF02347">
    <property type="entry name" value="GDC-P"/>
    <property type="match status" value="2"/>
</dbReference>
<dbReference type="SUPFAM" id="SSF53383">
    <property type="entry name" value="PLP-dependent transferases"/>
    <property type="match status" value="2"/>
</dbReference>